<dbReference type="EC" id="2.3.2.29" evidence="1"/>
<dbReference type="EMBL" id="CP000304">
    <property type="protein sequence ID" value="ABP79955.1"/>
    <property type="molecule type" value="Genomic_DNA"/>
</dbReference>
<dbReference type="RefSeq" id="WP_011913422.1">
    <property type="nucleotide sequence ID" value="NC_009434.1"/>
</dbReference>
<dbReference type="SMR" id="A4VLV4"/>
<dbReference type="KEGG" id="psa:PST_2296"/>
<dbReference type="eggNOG" id="COG2935">
    <property type="taxonomic scope" value="Bacteria"/>
</dbReference>
<dbReference type="HOGENOM" id="CLU_077607_0_0_6"/>
<dbReference type="Proteomes" id="UP000000233">
    <property type="component" value="Chromosome"/>
</dbReference>
<dbReference type="GO" id="GO:0005737">
    <property type="term" value="C:cytoplasm"/>
    <property type="evidence" value="ECO:0007669"/>
    <property type="project" value="UniProtKB-SubCell"/>
</dbReference>
<dbReference type="GO" id="GO:0004057">
    <property type="term" value="F:arginyl-tRNA--protein transferase activity"/>
    <property type="evidence" value="ECO:0007669"/>
    <property type="project" value="InterPro"/>
</dbReference>
<dbReference type="GO" id="GO:0008914">
    <property type="term" value="F:leucyl-tRNA--protein transferase activity"/>
    <property type="evidence" value="ECO:0007669"/>
    <property type="project" value="UniProtKB-UniRule"/>
</dbReference>
<dbReference type="GO" id="GO:0071596">
    <property type="term" value="P:ubiquitin-dependent protein catabolic process via the N-end rule pathway"/>
    <property type="evidence" value="ECO:0007669"/>
    <property type="project" value="InterPro"/>
</dbReference>
<dbReference type="Gene3D" id="3.40.630.30">
    <property type="match status" value="1"/>
</dbReference>
<dbReference type="HAMAP" id="MF_00689">
    <property type="entry name" value="Bpt"/>
    <property type="match status" value="1"/>
</dbReference>
<dbReference type="InterPro" id="IPR016181">
    <property type="entry name" value="Acyl_CoA_acyltransferase"/>
</dbReference>
<dbReference type="InterPro" id="IPR017138">
    <property type="entry name" value="Asp_Glu_LeuTrfase"/>
</dbReference>
<dbReference type="InterPro" id="IPR030700">
    <property type="entry name" value="N-end_Aminoacyl_Trfase"/>
</dbReference>
<dbReference type="InterPro" id="IPR007472">
    <property type="entry name" value="N-end_Aminoacyl_Trfase_C"/>
</dbReference>
<dbReference type="InterPro" id="IPR007471">
    <property type="entry name" value="N-end_Aminoacyl_Trfase_N"/>
</dbReference>
<dbReference type="NCBIfam" id="NF002341">
    <property type="entry name" value="PRK01305.1-1"/>
    <property type="match status" value="1"/>
</dbReference>
<dbReference type="NCBIfam" id="NF002342">
    <property type="entry name" value="PRK01305.1-3"/>
    <property type="match status" value="1"/>
</dbReference>
<dbReference type="NCBIfam" id="NF002346">
    <property type="entry name" value="PRK01305.2-3"/>
    <property type="match status" value="1"/>
</dbReference>
<dbReference type="PANTHER" id="PTHR21367">
    <property type="entry name" value="ARGININE-TRNA-PROTEIN TRANSFERASE 1"/>
    <property type="match status" value="1"/>
</dbReference>
<dbReference type="PANTHER" id="PTHR21367:SF1">
    <property type="entry name" value="ARGINYL-TRNA--PROTEIN TRANSFERASE 1"/>
    <property type="match status" value="1"/>
</dbReference>
<dbReference type="Pfam" id="PF04377">
    <property type="entry name" value="ATE_C"/>
    <property type="match status" value="1"/>
</dbReference>
<dbReference type="Pfam" id="PF04376">
    <property type="entry name" value="ATE_N"/>
    <property type="match status" value="1"/>
</dbReference>
<dbReference type="PIRSF" id="PIRSF037208">
    <property type="entry name" value="ATE_pro_prd"/>
    <property type="match status" value="1"/>
</dbReference>
<dbReference type="SUPFAM" id="SSF55729">
    <property type="entry name" value="Acyl-CoA N-acyltransferases (Nat)"/>
    <property type="match status" value="1"/>
</dbReference>
<accession>A4VLV4</accession>
<name>BPT_STUS1</name>
<reference key="1">
    <citation type="journal article" date="2008" name="Proc. Natl. Acad. Sci. U.S.A.">
        <title>Nitrogen fixation island and rhizosphere competence traits in the genome of root-associated Pseudomonas stutzeri A1501.</title>
        <authorList>
            <person name="Yan Y."/>
            <person name="Yang J."/>
            <person name="Dou Y."/>
            <person name="Chen M."/>
            <person name="Ping S."/>
            <person name="Peng J."/>
            <person name="Lu W."/>
            <person name="Zhang W."/>
            <person name="Yao Z."/>
            <person name="Li H."/>
            <person name="Liu W."/>
            <person name="He S."/>
            <person name="Geng L."/>
            <person name="Zhang X."/>
            <person name="Yang F."/>
            <person name="Yu H."/>
            <person name="Zhan Y."/>
            <person name="Li D."/>
            <person name="Lin Z."/>
            <person name="Wang Y."/>
            <person name="Elmerich C."/>
            <person name="Lin M."/>
            <person name="Jin Q."/>
        </authorList>
    </citation>
    <scope>NUCLEOTIDE SEQUENCE [LARGE SCALE GENOMIC DNA]</scope>
    <source>
        <strain>A1501</strain>
    </source>
</reference>
<protein>
    <recommendedName>
        <fullName evidence="1">Aspartate/glutamate leucyltransferase</fullName>
        <ecNumber evidence="1">2.3.2.29</ecNumber>
    </recommendedName>
</protein>
<sequence>MTSLARLKFYATQPHACSYLPDEQATTLFLDPSQPMDVQVYAELSEMGFRRSGDHLYRPHCQRCSACIPARIPVNAPELSRQQKRILKRNADLQVRGVRPAFSEELYALYANYIEKRHADGDMYPPSREQFNTFLVRDLPFSRFYEFRLDGRLLAVAVTDVLPNGLSAVYTFYDPDEERRSLGRYAILWQMGEAARLGLKAVYLGYWIKNCRKMNYKTEYRPIELLVNQRWVTLS</sequence>
<keyword id="KW-0012">Acyltransferase</keyword>
<keyword id="KW-0963">Cytoplasm</keyword>
<keyword id="KW-1185">Reference proteome</keyword>
<keyword id="KW-0808">Transferase</keyword>
<proteinExistence type="inferred from homology"/>
<evidence type="ECO:0000255" key="1">
    <source>
        <dbReference type="HAMAP-Rule" id="MF_00689"/>
    </source>
</evidence>
<feature type="chain" id="PRO_1000045146" description="Aspartate/glutamate leucyltransferase">
    <location>
        <begin position="1"/>
        <end position="235"/>
    </location>
</feature>
<organism>
    <name type="scientific">Stutzerimonas stutzeri (strain A1501)</name>
    <name type="common">Pseudomonas stutzeri</name>
    <dbReference type="NCBI Taxonomy" id="379731"/>
    <lineage>
        <taxon>Bacteria</taxon>
        <taxon>Pseudomonadati</taxon>
        <taxon>Pseudomonadota</taxon>
        <taxon>Gammaproteobacteria</taxon>
        <taxon>Pseudomonadales</taxon>
        <taxon>Pseudomonadaceae</taxon>
        <taxon>Stutzerimonas</taxon>
    </lineage>
</organism>
<comment type="function">
    <text evidence="1">Functions in the N-end rule pathway of protein degradation where it conjugates Leu from its aminoacyl-tRNA to the N-termini of proteins containing an N-terminal aspartate or glutamate.</text>
</comment>
<comment type="catalytic activity">
    <reaction evidence="1">
        <text>N-terminal L-glutamyl-[protein] + L-leucyl-tRNA(Leu) = N-terminal L-leucyl-L-glutamyl-[protein] + tRNA(Leu) + H(+)</text>
        <dbReference type="Rhea" id="RHEA:50412"/>
        <dbReference type="Rhea" id="RHEA-COMP:9613"/>
        <dbReference type="Rhea" id="RHEA-COMP:9622"/>
        <dbReference type="Rhea" id="RHEA-COMP:12664"/>
        <dbReference type="Rhea" id="RHEA-COMP:12668"/>
        <dbReference type="ChEBI" id="CHEBI:15378"/>
        <dbReference type="ChEBI" id="CHEBI:64721"/>
        <dbReference type="ChEBI" id="CHEBI:78442"/>
        <dbReference type="ChEBI" id="CHEBI:78494"/>
        <dbReference type="ChEBI" id="CHEBI:133041"/>
        <dbReference type="EC" id="2.3.2.29"/>
    </reaction>
</comment>
<comment type="catalytic activity">
    <reaction evidence="1">
        <text>N-terminal L-aspartyl-[protein] + L-leucyl-tRNA(Leu) = N-terminal L-leucyl-L-aspartyl-[protein] + tRNA(Leu) + H(+)</text>
        <dbReference type="Rhea" id="RHEA:50420"/>
        <dbReference type="Rhea" id="RHEA-COMP:9613"/>
        <dbReference type="Rhea" id="RHEA-COMP:9622"/>
        <dbReference type="Rhea" id="RHEA-COMP:12669"/>
        <dbReference type="Rhea" id="RHEA-COMP:12674"/>
        <dbReference type="ChEBI" id="CHEBI:15378"/>
        <dbReference type="ChEBI" id="CHEBI:64720"/>
        <dbReference type="ChEBI" id="CHEBI:78442"/>
        <dbReference type="ChEBI" id="CHEBI:78494"/>
        <dbReference type="ChEBI" id="CHEBI:133042"/>
        <dbReference type="EC" id="2.3.2.29"/>
    </reaction>
</comment>
<comment type="subcellular location">
    <subcellularLocation>
        <location evidence="1">Cytoplasm</location>
    </subcellularLocation>
</comment>
<comment type="similarity">
    <text evidence="1">Belongs to the R-transferase family. Bpt subfamily.</text>
</comment>
<gene>
    <name evidence="1" type="primary">bpt</name>
    <name type="ordered locus">PST_2296</name>
</gene>